<feature type="transit peptide" description="Chloroplast" evidence="1">
    <location>
        <begin position="1"/>
        <end position="55"/>
    </location>
</feature>
<feature type="chain" id="PRO_0000458870" description="Protein SEEDLING LETHAL 1, chloroplastic">
    <location>
        <begin position="56"/>
        <end position="333"/>
    </location>
</feature>
<feature type="region of interest" description="Disordered" evidence="2">
    <location>
        <begin position="38"/>
        <end position="67"/>
    </location>
</feature>
<feature type="splice variant" id="VSP_061985" description="In isoform 2.">
    <original>CCDSS</original>
    <variation>HFCNE</variation>
    <location>
        <begin position="314"/>
        <end position="318"/>
    </location>
</feature>
<feature type="splice variant" id="VSP_061986" description="In isoform 2.">
    <location>
        <begin position="319"/>
        <end position="333"/>
    </location>
</feature>
<feature type="sequence conflict" description="In Ref. 5; AAM61550." evidence="13" ref="5">
    <original>S</original>
    <variation>ST</variation>
    <location>
        <position position="58"/>
    </location>
</feature>
<feature type="sequence conflict" description="In Ref. 5; AAM61550." evidence="13" ref="5">
    <original>Q</original>
    <variation>E</variation>
    <location>
        <position position="122"/>
    </location>
</feature>
<keyword id="KW-0025">Alternative splicing</keyword>
<keyword id="KW-0150">Chloroplast</keyword>
<keyword id="KW-0934">Plastid</keyword>
<keyword id="KW-1185">Reference proteome</keyword>
<keyword id="KW-0804">Transcription</keyword>
<keyword id="KW-0805">Transcription regulation</keyword>
<keyword id="KW-0806">Transcription termination</keyword>
<keyword id="KW-0809">Transit peptide</keyword>
<organism>
    <name type="scientific">Arabidopsis thaliana</name>
    <name type="common">Mouse-ear cress</name>
    <dbReference type="NCBI Taxonomy" id="3702"/>
    <lineage>
        <taxon>Eukaryota</taxon>
        <taxon>Viridiplantae</taxon>
        <taxon>Streptophyta</taxon>
        <taxon>Embryophyta</taxon>
        <taxon>Tracheophyta</taxon>
        <taxon>Spermatophyta</taxon>
        <taxon>Magnoliopsida</taxon>
        <taxon>eudicotyledons</taxon>
        <taxon>Gunneridae</taxon>
        <taxon>Pentapetalae</taxon>
        <taxon>rosids</taxon>
        <taxon>malvids</taxon>
        <taxon>Brassicales</taxon>
        <taxon>Brassicaceae</taxon>
        <taxon>Camelineae</taxon>
        <taxon>Arabidopsis</taxon>
    </lineage>
</organism>
<proteinExistence type="evidence at protein level"/>
<accession>Q9SJ50</accession>
<accession>Q8LF84</accession>
<accession>Q8S8E4</accession>
<name>SL1_ARATH</name>
<dbReference type="EMBL" id="AC007017">
    <property type="protein sequence ID" value="AAD21457.2"/>
    <property type="molecule type" value="Genomic_DNA"/>
</dbReference>
<dbReference type="EMBL" id="CP002685">
    <property type="protein sequence ID" value="AEC09189.1"/>
    <property type="molecule type" value="Genomic_DNA"/>
</dbReference>
<dbReference type="EMBL" id="CP002685">
    <property type="protein sequence ID" value="AEC09190.1"/>
    <property type="molecule type" value="Genomic_DNA"/>
</dbReference>
<dbReference type="EMBL" id="AY039871">
    <property type="protein sequence ID" value="AAK63975.1"/>
    <property type="molecule type" value="mRNA"/>
</dbReference>
<dbReference type="EMBL" id="AY039888">
    <property type="protein sequence ID" value="AAK63992.1"/>
    <property type="molecule type" value="mRNA"/>
</dbReference>
<dbReference type="EMBL" id="AY077666">
    <property type="protein sequence ID" value="AAL76144.1"/>
    <property type="molecule type" value="mRNA"/>
</dbReference>
<dbReference type="EMBL" id="AK316766">
    <property type="protein sequence ID" value="BAH19486.1"/>
    <property type="molecule type" value="mRNA"/>
</dbReference>
<dbReference type="EMBL" id="AY084991">
    <property type="protein sequence ID" value="AAM61550.1"/>
    <property type="molecule type" value="mRNA"/>
</dbReference>
<dbReference type="PIR" id="F84775">
    <property type="entry name" value="F84775"/>
</dbReference>
<dbReference type="RefSeq" id="NP_850257.1">
    <molecule id="Q9SJ50-1"/>
    <property type="nucleotide sequence ID" value="NM_179926.2"/>
</dbReference>
<dbReference type="RefSeq" id="NP_850258.1">
    <molecule id="Q9SJ50-2"/>
    <property type="nucleotide sequence ID" value="NM_179927.2"/>
</dbReference>
<dbReference type="SMR" id="Q9SJ50"/>
<dbReference type="FunCoup" id="Q9SJ50">
    <property type="interactions" value="1332"/>
</dbReference>
<dbReference type="IntAct" id="Q9SJ50">
    <property type="interactions" value="11"/>
</dbReference>
<dbReference type="STRING" id="3702.Q9SJ50"/>
<dbReference type="PaxDb" id="3702-AT2G36000.1"/>
<dbReference type="ProteomicsDB" id="185525"/>
<dbReference type="ProteomicsDB" id="191841"/>
<dbReference type="EnsemblPlants" id="AT2G36000.1">
    <molecule id="Q9SJ50-1"/>
    <property type="protein sequence ID" value="AT2G36000.1"/>
    <property type="gene ID" value="AT2G36000"/>
</dbReference>
<dbReference type="EnsemblPlants" id="AT2G36000.2">
    <molecule id="Q9SJ50-2"/>
    <property type="protein sequence ID" value="AT2G36000.2"/>
    <property type="gene ID" value="AT2G36000"/>
</dbReference>
<dbReference type="GeneID" id="818173"/>
<dbReference type="Gramene" id="AT2G36000.1">
    <molecule id="Q9SJ50-1"/>
    <property type="protein sequence ID" value="AT2G36000.1"/>
    <property type="gene ID" value="AT2G36000"/>
</dbReference>
<dbReference type="Gramene" id="AT2G36000.2">
    <molecule id="Q9SJ50-2"/>
    <property type="protein sequence ID" value="AT2G36000.2"/>
    <property type="gene ID" value="AT2G36000"/>
</dbReference>
<dbReference type="KEGG" id="ath:AT2G36000"/>
<dbReference type="Araport" id="AT2G36000"/>
<dbReference type="TAIR" id="AT2G36000"/>
<dbReference type="eggNOG" id="KOG1267">
    <property type="taxonomic scope" value="Eukaryota"/>
</dbReference>
<dbReference type="HOGENOM" id="CLU_032090_0_0_1"/>
<dbReference type="OMA" id="SPLWCAG"/>
<dbReference type="OrthoDB" id="637682at2759"/>
<dbReference type="PRO" id="PR:Q9SJ50"/>
<dbReference type="Proteomes" id="UP000006548">
    <property type="component" value="Chromosome 2"/>
</dbReference>
<dbReference type="ExpressionAtlas" id="Q9SJ50">
    <property type="expression patterns" value="baseline and differential"/>
</dbReference>
<dbReference type="GO" id="GO:0009507">
    <property type="term" value="C:chloroplast"/>
    <property type="evidence" value="ECO:0000314"/>
    <property type="project" value="UniProtKB"/>
</dbReference>
<dbReference type="GO" id="GO:0042644">
    <property type="term" value="C:chloroplast nucleoid"/>
    <property type="evidence" value="ECO:0000314"/>
    <property type="project" value="UniProtKB"/>
</dbReference>
<dbReference type="GO" id="GO:0009570">
    <property type="term" value="C:chloroplast stroma"/>
    <property type="evidence" value="ECO:0000314"/>
    <property type="project" value="TAIR"/>
</dbReference>
<dbReference type="GO" id="GO:0003690">
    <property type="term" value="F:double-stranded DNA binding"/>
    <property type="evidence" value="ECO:0007669"/>
    <property type="project" value="InterPro"/>
</dbReference>
<dbReference type="GO" id="GO:0001052">
    <property type="term" value="F:plastid PEP RNA polymerase core enzyme binding"/>
    <property type="evidence" value="ECO:0000314"/>
    <property type="project" value="UniProtKB"/>
</dbReference>
<dbReference type="GO" id="GO:0006353">
    <property type="term" value="P:DNA-templated transcription termination"/>
    <property type="evidence" value="ECO:0007669"/>
    <property type="project" value="UniProtKB-KW"/>
</dbReference>
<dbReference type="GO" id="GO:0048598">
    <property type="term" value="P:embryonic morphogenesis"/>
    <property type="evidence" value="ECO:0000315"/>
    <property type="project" value="UniProtKB"/>
</dbReference>
<dbReference type="GO" id="GO:0140899">
    <property type="term" value="P:plastid gene expression"/>
    <property type="evidence" value="ECO:0000315"/>
    <property type="project" value="UniProtKB"/>
</dbReference>
<dbReference type="GO" id="GO:0006355">
    <property type="term" value="P:regulation of DNA-templated transcription"/>
    <property type="evidence" value="ECO:0007669"/>
    <property type="project" value="InterPro"/>
</dbReference>
<dbReference type="FunFam" id="1.25.70.10:FF:000010">
    <property type="entry name" value="Transcription termination factor MTEF1, chloroplastic"/>
    <property type="match status" value="1"/>
</dbReference>
<dbReference type="Gene3D" id="1.25.70.10">
    <property type="entry name" value="Transcription termination factor 3, mitochondrial"/>
    <property type="match status" value="1"/>
</dbReference>
<dbReference type="InterPro" id="IPR003690">
    <property type="entry name" value="MTERF"/>
</dbReference>
<dbReference type="InterPro" id="IPR038538">
    <property type="entry name" value="MTERF_sf"/>
</dbReference>
<dbReference type="PANTHER" id="PTHR13068">
    <property type="entry name" value="CGI-12 PROTEIN-RELATED"/>
    <property type="match status" value="1"/>
</dbReference>
<dbReference type="PANTHER" id="PTHR13068:SF46">
    <property type="entry name" value="OS03G0360600 PROTEIN"/>
    <property type="match status" value="1"/>
</dbReference>
<dbReference type="Pfam" id="PF02536">
    <property type="entry name" value="mTERF"/>
    <property type="match status" value="1"/>
</dbReference>
<dbReference type="SMART" id="SM00733">
    <property type="entry name" value="Mterf"/>
    <property type="match status" value="5"/>
</dbReference>
<evidence type="ECO:0000255" key="1"/>
<evidence type="ECO:0000256" key="2">
    <source>
        <dbReference type="SAM" id="MobiDB-lite"/>
    </source>
</evidence>
<evidence type="ECO:0000269" key="3">
    <source>
    </source>
</evidence>
<evidence type="ECO:0000269" key="4">
    <source>
    </source>
</evidence>
<evidence type="ECO:0000269" key="5">
    <source>
    </source>
</evidence>
<evidence type="ECO:0000269" key="6">
    <source>
    </source>
</evidence>
<evidence type="ECO:0000269" key="7">
    <source>
    </source>
</evidence>
<evidence type="ECO:0000303" key="8">
    <source>
    </source>
</evidence>
<evidence type="ECO:0000303" key="9">
    <source>
    </source>
</evidence>
<evidence type="ECO:0000303" key="10">
    <source>
    </source>
</evidence>
<evidence type="ECO:0000303" key="11">
    <source>
    </source>
</evidence>
<evidence type="ECO:0000303" key="12">
    <source>
    </source>
</evidence>
<evidence type="ECO:0000305" key="13"/>
<evidence type="ECO:0000305" key="14">
    <source>
    </source>
</evidence>
<evidence type="ECO:0000312" key="15">
    <source>
        <dbReference type="Araport" id="AT2G36000"/>
    </source>
</evidence>
<evidence type="ECO:0000312" key="16">
    <source>
        <dbReference type="EMBL" id="AAD21457.2"/>
    </source>
</evidence>
<comment type="function">
    <text evidence="3 6 7">Transcription termination factor required for chloroplast gene expression and protein synthesis in chloroplasts (PubMed:33391315). Necessary for chloroplast photosynthetic complexes assembly by modulating the accumulation of photosynthetic proteins (PubMed:33391315). Essential for embryogenesis (PubMed:21139083, PubMed:31334862).</text>
</comment>
<comment type="subunit">
    <text evidence="7">Self-interacts (PubMed:33391315). Associates with the plastid-encoded RNA polymerase (PEP) complex (PubMed:33391315). Interacts directly with PTAC7/PAP12, PTAC12/HMR/PAP5 and PTAC14/PAP7 (PubMed:33391315).</text>
</comment>
<comment type="subcellular location">
    <subcellularLocation>
        <location evidence="4 5 7">Plastid</location>
        <location evidence="4 5 7">Chloroplast stroma</location>
    </subcellularLocation>
    <subcellularLocation>
        <location evidence="7">Plastid</location>
        <location evidence="7">Chloroplast stroma</location>
        <location evidence="7">Chloroplast nucleoid</location>
    </subcellularLocation>
</comment>
<comment type="alternative products">
    <event type="alternative splicing"/>
    <isoform>
        <id>Q9SJ50-1</id>
        <name>1</name>
        <sequence type="displayed"/>
    </isoform>
    <isoform>
        <id>Q9SJ50-2</id>
        <name>2</name>
        <sequence type="described" ref="VSP_061985 VSP_061986"/>
    </isoform>
</comment>
<comment type="tissue specificity">
    <text evidence="7">Expressed in green aerial tissues such as cotyledons, leaves, flowers and siliques, but not in roots.</text>
</comment>
<comment type="developmental stage">
    <text evidence="7">In flowers, confined to green tissues, including sepals, stamens and carpels, but not in petals.</text>
</comment>
<comment type="disruption phenotype">
    <text evidence="3 6 7">Embryo lethal arrested at the globular stage (PubMed:21139083, PubMed:31334862). Seedling-lethal with albino phenotype due to defects in chloroplast development, photosystem assembly, and associated with an accumulation of photosynthetic proteins (PubMed:33391315).</text>
</comment>
<comment type="similarity">
    <text evidence="13">Belongs to the mTERF family.</text>
</comment>
<comment type="online information" name="Seed defective Arabidopsis mutants">
    <link uri="http://seedgenes.org/MutantList"/>
</comment>
<reference key="1">
    <citation type="journal article" date="1999" name="Nature">
        <title>Sequence and analysis of chromosome 2 of the plant Arabidopsis thaliana.</title>
        <authorList>
            <person name="Lin X."/>
            <person name="Kaul S."/>
            <person name="Rounsley S.D."/>
            <person name="Shea T.P."/>
            <person name="Benito M.-I."/>
            <person name="Town C.D."/>
            <person name="Fujii C.Y."/>
            <person name="Mason T.M."/>
            <person name="Bowman C.L."/>
            <person name="Barnstead M.E."/>
            <person name="Feldblyum T.V."/>
            <person name="Buell C.R."/>
            <person name="Ketchum K.A."/>
            <person name="Lee J.J."/>
            <person name="Ronning C.M."/>
            <person name="Koo H.L."/>
            <person name="Moffat K.S."/>
            <person name="Cronin L.A."/>
            <person name="Shen M."/>
            <person name="Pai G."/>
            <person name="Van Aken S."/>
            <person name="Umayam L."/>
            <person name="Tallon L.J."/>
            <person name="Gill J.E."/>
            <person name="Adams M.D."/>
            <person name="Carrera A.J."/>
            <person name="Creasy T.H."/>
            <person name="Goodman H.M."/>
            <person name="Somerville C.R."/>
            <person name="Copenhaver G.P."/>
            <person name="Preuss D."/>
            <person name="Nierman W.C."/>
            <person name="White O."/>
            <person name="Eisen J.A."/>
            <person name="Salzberg S.L."/>
            <person name="Fraser C.M."/>
            <person name="Venter J.C."/>
        </authorList>
    </citation>
    <scope>NUCLEOTIDE SEQUENCE [LARGE SCALE GENOMIC DNA]</scope>
    <source>
        <strain>cv. Columbia</strain>
    </source>
</reference>
<reference key="2">
    <citation type="journal article" date="2017" name="Plant J.">
        <title>Araport11: a complete reannotation of the Arabidopsis thaliana reference genome.</title>
        <authorList>
            <person name="Cheng C.Y."/>
            <person name="Krishnakumar V."/>
            <person name="Chan A.P."/>
            <person name="Thibaud-Nissen F."/>
            <person name="Schobel S."/>
            <person name="Town C.D."/>
        </authorList>
    </citation>
    <scope>GENOME REANNOTATION</scope>
    <source>
        <strain>cv. Columbia</strain>
    </source>
</reference>
<reference key="3">
    <citation type="journal article" date="2003" name="Science">
        <title>Empirical analysis of transcriptional activity in the Arabidopsis genome.</title>
        <authorList>
            <person name="Yamada K."/>
            <person name="Lim J."/>
            <person name="Dale J.M."/>
            <person name="Chen H."/>
            <person name="Shinn P."/>
            <person name="Palm C.J."/>
            <person name="Southwick A.M."/>
            <person name="Wu H.C."/>
            <person name="Kim C.J."/>
            <person name="Nguyen M."/>
            <person name="Pham P.K."/>
            <person name="Cheuk R.F."/>
            <person name="Karlin-Newmann G."/>
            <person name="Liu S.X."/>
            <person name="Lam B."/>
            <person name="Sakano H."/>
            <person name="Wu T."/>
            <person name="Yu G."/>
            <person name="Miranda M."/>
            <person name="Quach H.L."/>
            <person name="Tripp M."/>
            <person name="Chang C.H."/>
            <person name="Lee J.M."/>
            <person name="Toriumi M.J."/>
            <person name="Chan M.M."/>
            <person name="Tang C.C."/>
            <person name="Onodera C.S."/>
            <person name="Deng J.M."/>
            <person name="Akiyama K."/>
            <person name="Ansari Y."/>
            <person name="Arakawa T."/>
            <person name="Banh J."/>
            <person name="Banno F."/>
            <person name="Bowser L."/>
            <person name="Brooks S.Y."/>
            <person name="Carninci P."/>
            <person name="Chao Q."/>
            <person name="Choy N."/>
            <person name="Enju A."/>
            <person name="Goldsmith A.D."/>
            <person name="Gurjal M."/>
            <person name="Hansen N.F."/>
            <person name="Hayashizaki Y."/>
            <person name="Johnson-Hopson C."/>
            <person name="Hsuan V.W."/>
            <person name="Iida K."/>
            <person name="Karnes M."/>
            <person name="Khan S."/>
            <person name="Koesema E."/>
            <person name="Ishida J."/>
            <person name="Jiang P.X."/>
            <person name="Jones T."/>
            <person name="Kawai J."/>
            <person name="Kamiya A."/>
            <person name="Meyers C."/>
            <person name="Nakajima M."/>
            <person name="Narusaka M."/>
            <person name="Seki M."/>
            <person name="Sakurai T."/>
            <person name="Satou M."/>
            <person name="Tamse R."/>
            <person name="Vaysberg M."/>
            <person name="Wallender E.K."/>
            <person name="Wong C."/>
            <person name="Yamamura Y."/>
            <person name="Yuan S."/>
            <person name="Shinozaki K."/>
            <person name="Davis R.W."/>
            <person name="Theologis A."/>
            <person name="Ecker J.R."/>
        </authorList>
    </citation>
    <scope>NUCLEOTIDE SEQUENCE [LARGE SCALE MRNA] (ISOFORM 2)</scope>
    <source>
        <strain>cv. Columbia</strain>
    </source>
</reference>
<reference key="4">
    <citation type="journal article" date="2009" name="DNA Res.">
        <title>Analysis of multiple occurrences of alternative splicing events in Arabidopsis thaliana using novel sequenced full-length cDNAs.</title>
        <authorList>
            <person name="Iida K."/>
            <person name="Fukami-Kobayashi K."/>
            <person name="Toyoda A."/>
            <person name="Sakaki Y."/>
            <person name="Kobayashi M."/>
            <person name="Seki M."/>
            <person name="Shinozaki K."/>
        </authorList>
    </citation>
    <scope>NUCLEOTIDE SEQUENCE [LARGE SCALE MRNA] (ISOFORM 2)</scope>
    <source>
        <strain>cv. Columbia</strain>
        <tissue>Rosette leaf</tissue>
    </source>
</reference>
<reference key="5">
    <citation type="submission" date="2002-03" db="EMBL/GenBank/DDBJ databases">
        <title>Full-length cDNA from Arabidopsis thaliana.</title>
        <authorList>
            <person name="Brover V.V."/>
            <person name="Troukhan M.E."/>
            <person name="Alexandrov N.A."/>
            <person name="Lu Y.-P."/>
            <person name="Flavell R.B."/>
            <person name="Feldmann K.A."/>
        </authorList>
    </citation>
    <scope>NUCLEOTIDE SEQUENCE [LARGE SCALE MRNA] (ISOFORM 2)</scope>
</reference>
<reference key="6">
    <citation type="journal article" date="2011" name="Plant Physiol.">
        <title>Identification of nuclear genes encoding chloroplast-localized proteins required for embryo development in Arabidopsis.</title>
        <authorList>
            <person name="Bryant N."/>
            <person name="Lloyd J."/>
            <person name="Sweeney C."/>
            <person name="Myouga F."/>
            <person name="Meinke D."/>
        </authorList>
    </citation>
    <scope>FUNCTION [LARGE SCALE ANALYSIS]</scope>
    <scope>DISRUPTION PHENOTYPE [LARGE SCALE ANALYSIS]</scope>
    <source>
        <strain>cv. No-0</strain>
    </source>
</reference>
<reference key="7">
    <citation type="journal article" date="2012" name="Front. Plant Sci.">
        <title>Arabidopsis thaliana mTERF proteins: evolution and functional classification.</title>
        <authorList>
            <person name="Kleine T."/>
        </authorList>
    </citation>
    <scope>SUBCELLULAR LOCATION</scope>
    <scope>GENE FAMILY</scope>
</reference>
<reference key="8">
    <citation type="journal article" date="2018" name="PLoS ONE">
        <title>Control of organelle gene expression by the mitochondrial transcription termination factor mTERF22 in Arabidopsis thaliana plants.</title>
        <authorList>
            <person name="Shevtsov S."/>
            <person name="Nevo-Dinur K."/>
            <person name="Faigon L."/>
            <person name="Sultan L.D."/>
            <person name="Zmudjak M."/>
            <person name="Markovits M."/>
            <person name="Ostersetzer-Biran O."/>
        </authorList>
    </citation>
    <scope>SUBCELLULAR LOCATION</scope>
    <scope>GENE FAMILY</scope>
    <scope>NOMENCLATURE</scope>
    <source>
        <strain>cv. Columbia</strain>
    </source>
</reference>
<reference key="9">
    <citation type="journal article" date="2020" name="Front. Plant Sci.">
        <title>Arabidopsis Seedling Lethal 1 interacting with plastid-encoded RNA polymerase complex proteins is essential for chloroplast development.</title>
        <authorList>
            <person name="Jiang D."/>
            <person name="Tang R."/>
            <person name="Shi Y."/>
            <person name="Ke X."/>
            <person name="Wang Y."/>
            <person name="Che Y."/>
            <person name="Luan S."/>
            <person name="Hou X."/>
        </authorList>
    </citation>
    <scope>FUNCTION</scope>
    <scope>DISRUPTION PHENOTYPE</scope>
    <scope>SUBCELLULAR LOCATION</scope>
    <scope>INTERACTION WITH PTAC7/PAP12; PTAC12/HMR/PAP5 AND PTAC14/PAP7</scope>
    <scope>SUBUNIT</scope>
    <scope>TISSUE SPECIFICITY</scope>
    <scope>DEVELOPMENTAL STAGE</scope>
    <source>
        <strain>cv. Columbia</strain>
    </source>
</reference>
<reference key="10">
    <citation type="journal article" date="2020" name="New Phytol.">
        <title>Genome-wide identification of EMBRYO-DEFECTIVE (EMB) genes required for growth and development in Arabidopsis.</title>
        <authorList>
            <person name="Meinke D.W."/>
        </authorList>
    </citation>
    <scope>FUNCTION [LARGE SCALE ANALYSIS]</scope>
    <scope>DISRUPTION PHENOTYPE [LARGE SCALE ANALYSIS]</scope>
</reference>
<sequence length="333" mass="37953">MQQEALSFLSSSLPSLHHNFPSLSRLRFNNFPALSFKPNTSSSSSSFFKSPDIPSLSSTTTTTTTTETLESSIHEKLIYLDSLGIDFLTLINRHPPLLSTALSAVESVVDYMTTPPINFTLQDFRRLVSMCPELLTSPLTSHTIPVITFLLREVGVDSIFDLRQALRRRPRLLACSVDHQLRPTLYFLQRIGILDPHKHTYLLSCSVDNKLVPRIDYFEKLGFSRRSATAMFKRFPQLFNYSIAENYEPKLKYLMVEMGRDVREVLEFPQYFSFSLENRIKPRHEACAAKGVRFPLPVMLKTNEAGFRDTLEVCCDSSPPLKTSRLVTVQKDS</sequence>
<gene>
    <name evidence="12" type="primary">SL1</name>
    <name evidence="8 11" type="synonym">EMB3114</name>
    <name evidence="9 10" type="synonym">MTERF3</name>
    <name evidence="15" type="ordered locus">At2g36000</name>
    <name evidence="16" type="ORF">F11F19.9</name>
</gene>
<protein>
    <recommendedName>
        <fullName evidence="12">Protein SEEDLING LETHAL 1, chloroplastic</fullName>
    </recommendedName>
    <alternativeName>
        <fullName evidence="9 10">Mitochondrial transcription termination factor 3</fullName>
        <shortName evidence="9 10">mTERF 3</shortName>
    </alternativeName>
    <alternativeName>
        <fullName evidence="8 11">Protein EMBRYO DEFECTIVE 3114</fullName>
    </alternativeName>
    <alternativeName>
        <fullName evidence="14">Transcription termination factor mTERF3</fullName>
    </alternativeName>
</protein>